<keyword id="KW-0025">Alternative splicing</keyword>
<keyword id="KW-0539">Nucleus</keyword>
<keyword id="KW-1185">Reference proteome</keyword>
<keyword id="KW-0694">RNA-binding</keyword>
<accession>Q0V7U7</accession>
<accession>C0Z3H3</accession>
<accession>F4HQC8</accession>
<accession>Q0WRW1</accession>
<accession>Q9CA91</accession>
<comment type="function">
    <text evidence="1">Binds to the 3' poly(U) terminus of nascent RNA polymerase III transcripts, protecting them from exonuclease digestion and facilitating their folding and maturation.</text>
</comment>
<comment type="subcellular location">
    <subcellularLocation>
        <location evidence="1">Nucleus</location>
        <location evidence="1">Nucleoplasm</location>
    </subcellularLocation>
    <subcellularLocation>
        <location evidence="1">Nucleus</location>
        <location evidence="1">Nucleolus</location>
    </subcellularLocation>
</comment>
<comment type="alternative products">
    <event type="alternative splicing"/>
    <isoform>
        <id>Q0V7U7-1</id>
        <name>1</name>
        <sequence type="displayed"/>
    </isoform>
    <isoform>
        <id>Q0V7U7-2</id>
        <name>2</name>
        <sequence type="described" ref="VSP_054171"/>
    </isoform>
    <isoform>
        <id>Q0V7U7-3</id>
        <name>3</name>
        <sequence type="described" ref="VSP_054171 VSP_054172"/>
    </isoform>
</comment>
<comment type="tissue specificity">
    <text evidence="6">Expressed ubiquitously (at protein level).</text>
</comment>
<comment type="sequence caution" evidence="8">
    <conflict type="erroneous gene model prediction">
        <sequence resource="EMBL-CDS" id="AAG52256"/>
    </conflict>
</comment>
<gene>
    <name type="primary">LA2</name>
    <name type="ordered locus">At1g79880</name>
    <name type="ORF">F19K16.16</name>
</gene>
<reference key="1">
    <citation type="journal article" date="2000" name="Nature">
        <title>Sequence and analysis of chromosome 1 of the plant Arabidopsis thaliana.</title>
        <authorList>
            <person name="Theologis A."/>
            <person name="Ecker J.R."/>
            <person name="Palm C.J."/>
            <person name="Federspiel N.A."/>
            <person name="Kaul S."/>
            <person name="White O."/>
            <person name="Alonso J."/>
            <person name="Altafi H."/>
            <person name="Araujo R."/>
            <person name="Bowman C.L."/>
            <person name="Brooks S.Y."/>
            <person name="Buehler E."/>
            <person name="Chan A."/>
            <person name="Chao Q."/>
            <person name="Chen H."/>
            <person name="Cheuk R.F."/>
            <person name="Chin C.W."/>
            <person name="Chung M.K."/>
            <person name="Conn L."/>
            <person name="Conway A.B."/>
            <person name="Conway A.R."/>
            <person name="Creasy T.H."/>
            <person name="Dewar K."/>
            <person name="Dunn P."/>
            <person name="Etgu P."/>
            <person name="Feldblyum T.V."/>
            <person name="Feng J.-D."/>
            <person name="Fong B."/>
            <person name="Fujii C.Y."/>
            <person name="Gill J.E."/>
            <person name="Goldsmith A.D."/>
            <person name="Haas B."/>
            <person name="Hansen N.F."/>
            <person name="Hughes B."/>
            <person name="Huizar L."/>
            <person name="Hunter J.L."/>
            <person name="Jenkins J."/>
            <person name="Johnson-Hopson C."/>
            <person name="Khan S."/>
            <person name="Khaykin E."/>
            <person name="Kim C.J."/>
            <person name="Koo H.L."/>
            <person name="Kremenetskaia I."/>
            <person name="Kurtz D.B."/>
            <person name="Kwan A."/>
            <person name="Lam B."/>
            <person name="Langin-Hooper S."/>
            <person name="Lee A."/>
            <person name="Lee J.M."/>
            <person name="Lenz C.A."/>
            <person name="Li J.H."/>
            <person name="Li Y.-P."/>
            <person name="Lin X."/>
            <person name="Liu S.X."/>
            <person name="Liu Z.A."/>
            <person name="Luros J.S."/>
            <person name="Maiti R."/>
            <person name="Marziali A."/>
            <person name="Militscher J."/>
            <person name="Miranda M."/>
            <person name="Nguyen M."/>
            <person name="Nierman W.C."/>
            <person name="Osborne B.I."/>
            <person name="Pai G."/>
            <person name="Peterson J."/>
            <person name="Pham P.K."/>
            <person name="Rizzo M."/>
            <person name="Rooney T."/>
            <person name="Rowley D."/>
            <person name="Sakano H."/>
            <person name="Salzberg S.L."/>
            <person name="Schwartz J.R."/>
            <person name="Shinn P."/>
            <person name="Southwick A.M."/>
            <person name="Sun H."/>
            <person name="Tallon L.J."/>
            <person name="Tambunga G."/>
            <person name="Toriumi M.J."/>
            <person name="Town C.D."/>
            <person name="Utterback T."/>
            <person name="Van Aken S."/>
            <person name="Vaysberg M."/>
            <person name="Vysotskaia V.S."/>
            <person name="Walker M."/>
            <person name="Wu D."/>
            <person name="Yu G."/>
            <person name="Fraser C.M."/>
            <person name="Venter J.C."/>
            <person name="Davis R.W."/>
        </authorList>
    </citation>
    <scope>NUCLEOTIDE SEQUENCE [LARGE SCALE GENOMIC DNA]</scope>
    <source>
        <strain>cv. Columbia</strain>
    </source>
</reference>
<reference key="2">
    <citation type="journal article" date="2017" name="Plant J.">
        <title>Araport11: a complete reannotation of the Arabidopsis thaliana reference genome.</title>
        <authorList>
            <person name="Cheng C.Y."/>
            <person name="Krishnakumar V."/>
            <person name="Chan A.P."/>
            <person name="Thibaud-Nissen F."/>
            <person name="Schobel S."/>
            <person name="Town C.D."/>
        </authorList>
    </citation>
    <scope>GENOME REANNOTATION</scope>
    <source>
        <strain>cv. Columbia</strain>
    </source>
</reference>
<reference key="3">
    <citation type="journal article" date="2009" name="DNA Res.">
        <title>Analysis of multiple occurrences of alternative splicing events in Arabidopsis thaliana using novel sequenced full-length cDNAs.</title>
        <authorList>
            <person name="Iida K."/>
            <person name="Fukami-Kobayashi K."/>
            <person name="Toyoda A."/>
            <person name="Sakaki Y."/>
            <person name="Kobayashi M."/>
            <person name="Seki M."/>
            <person name="Shinozaki K."/>
        </authorList>
    </citation>
    <scope>NUCLEOTIDE SEQUENCE [LARGE SCALE MRNA] (ISOFORM 2)</scope>
    <source>
        <strain>cv. Columbia</strain>
        <tissue>Rosette leaf</tissue>
    </source>
</reference>
<reference key="4">
    <citation type="submission" date="2006-07" db="EMBL/GenBank/DDBJ databases">
        <title>Large-scale analysis of RIKEN Arabidopsis full-length (RAFL) cDNAs.</title>
        <authorList>
            <person name="Totoki Y."/>
            <person name="Seki M."/>
            <person name="Ishida J."/>
            <person name="Nakajima M."/>
            <person name="Enju A."/>
            <person name="Kamiya A."/>
            <person name="Narusaka M."/>
            <person name="Shin-i T."/>
            <person name="Nakagawa M."/>
            <person name="Sakamoto N."/>
            <person name="Oishi K."/>
            <person name="Kohara Y."/>
            <person name="Kobayashi M."/>
            <person name="Toyoda A."/>
            <person name="Sakaki Y."/>
            <person name="Sakurai T."/>
            <person name="Iida K."/>
            <person name="Akiyama K."/>
            <person name="Satou M."/>
            <person name="Toyoda T."/>
            <person name="Konagaya A."/>
            <person name="Carninci P."/>
            <person name="Kawai J."/>
            <person name="Hayashizaki Y."/>
            <person name="Shinozaki K."/>
        </authorList>
    </citation>
    <scope>NUCLEOTIDE SEQUENCE [LARGE SCALE MRNA] (ISOFORM 1)</scope>
    <source>
        <strain>cv. Columbia</strain>
    </source>
</reference>
<reference key="5">
    <citation type="submission" date="2006-08" db="EMBL/GenBank/DDBJ databases">
        <title>Arabidopsis ORF Clones.</title>
        <authorList>
            <person name="Quinitio C."/>
            <person name="Chen H."/>
            <person name="Kim C.J."/>
            <person name="Shinn P."/>
            <person name="Ecker J.R."/>
        </authorList>
    </citation>
    <scope>NUCLEOTIDE SEQUENCE [LARGE SCALE MRNA] (ISOFORM 1)</scope>
    <source>
        <strain>cv. Columbia</strain>
    </source>
</reference>
<reference key="6">
    <citation type="journal article" date="2007" name="Nucleic Acids Res.">
        <title>A bona fide La protein is required for embryogenesis in Arabidopsis thaliana.</title>
        <authorList>
            <person name="Fleurdepine S."/>
            <person name="Deragon J.M."/>
            <person name="Devic M."/>
            <person name="Guilleminot J."/>
            <person name="Bousquet-Antonelli C."/>
        </authorList>
    </citation>
    <scope>TISSUE SPECIFICITY</scope>
    <scope>IDENTIFICATION</scope>
    <source>
        <strain>cv. Columbia</strain>
    </source>
</reference>
<reference key="7">
    <citation type="journal article" date="2009" name="RNA">
        <title>A comprehensive analysis of the La-motif protein superfamily.</title>
        <authorList>
            <person name="Bousquet-Antonelli C."/>
            <person name="Deragon J.M."/>
        </authorList>
    </citation>
    <scope>GENE FAMILY</scope>
    <scope>NOMENCLATURE</scope>
</reference>
<organism>
    <name type="scientific">Arabidopsis thaliana</name>
    <name type="common">Mouse-ear cress</name>
    <dbReference type="NCBI Taxonomy" id="3702"/>
    <lineage>
        <taxon>Eukaryota</taxon>
        <taxon>Viridiplantae</taxon>
        <taxon>Streptophyta</taxon>
        <taxon>Embryophyta</taxon>
        <taxon>Tracheophyta</taxon>
        <taxon>Spermatophyta</taxon>
        <taxon>Magnoliopsida</taxon>
        <taxon>eudicotyledons</taxon>
        <taxon>Gunneridae</taxon>
        <taxon>Pentapetalae</taxon>
        <taxon>rosids</taxon>
        <taxon>malvids</taxon>
        <taxon>Brassicales</taxon>
        <taxon>Brassicaceae</taxon>
        <taxon>Camelineae</taxon>
        <taxon>Arabidopsis</taxon>
    </lineage>
</organism>
<dbReference type="EMBL" id="AC011717">
    <property type="protein sequence ID" value="AAG52256.1"/>
    <property type="status" value="ALT_SEQ"/>
    <property type="molecule type" value="Genomic_DNA"/>
</dbReference>
<dbReference type="EMBL" id="CP002684">
    <property type="protein sequence ID" value="AEE36317.1"/>
    <property type="molecule type" value="Genomic_DNA"/>
</dbReference>
<dbReference type="EMBL" id="CP002684">
    <property type="protein sequence ID" value="AEE36318.1"/>
    <property type="molecule type" value="Genomic_DNA"/>
</dbReference>
<dbReference type="EMBL" id="CP002684">
    <property type="protein sequence ID" value="AEE36319.1"/>
    <property type="molecule type" value="Genomic_DNA"/>
</dbReference>
<dbReference type="EMBL" id="AK319137">
    <property type="protein sequence ID" value="BAH57252.1"/>
    <property type="molecule type" value="mRNA"/>
</dbReference>
<dbReference type="EMBL" id="AK228183">
    <property type="protein sequence ID" value="BAF00138.1"/>
    <property type="molecule type" value="mRNA"/>
</dbReference>
<dbReference type="EMBL" id="BT026473">
    <property type="protein sequence ID" value="ABH04580.1"/>
    <property type="molecule type" value="mRNA"/>
</dbReference>
<dbReference type="PIR" id="H96829">
    <property type="entry name" value="H96829"/>
</dbReference>
<dbReference type="RefSeq" id="NP_001319421.1">
    <molecule id="Q0V7U7-2"/>
    <property type="nucleotide sequence ID" value="NM_001334930.1"/>
</dbReference>
<dbReference type="RefSeq" id="NP_178106.2">
    <molecule id="Q0V7U7-1"/>
    <property type="nucleotide sequence ID" value="NM_106637.5"/>
</dbReference>
<dbReference type="RefSeq" id="NP_974185.1">
    <molecule id="Q0V7U7-3"/>
    <property type="nucleotide sequence ID" value="NM_202456.2"/>
</dbReference>
<dbReference type="SMR" id="Q0V7U7"/>
<dbReference type="FunCoup" id="Q0V7U7">
    <property type="interactions" value="3825"/>
</dbReference>
<dbReference type="STRING" id="3702.Q0V7U7"/>
<dbReference type="PaxDb" id="3702-AT1G79880.1"/>
<dbReference type="ProteomicsDB" id="237040">
    <molecule id="Q0V7U7-1"/>
</dbReference>
<dbReference type="EnsemblPlants" id="AT1G79880.1">
    <molecule id="Q0V7U7-1"/>
    <property type="protein sequence ID" value="AT1G79880.1"/>
    <property type="gene ID" value="AT1G79880"/>
</dbReference>
<dbReference type="EnsemblPlants" id="AT1G79880.2">
    <molecule id="Q0V7U7-2"/>
    <property type="protein sequence ID" value="AT1G79880.2"/>
    <property type="gene ID" value="AT1G79880"/>
</dbReference>
<dbReference type="EnsemblPlants" id="AT1G79880.3">
    <molecule id="Q0V7U7-3"/>
    <property type="protein sequence ID" value="AT1G79880.3"/>
    <property type="gene ID" value="AT1G79880"/>
</dbReference>
<dbReference type="GeneID" id="844327"/>
<dbReference type="Gramene" id="AT1G79880.1">
    <molecule id="Q0V7U7-1"/>
    <property type="protein sequence ID" value="AT1G79880.1"/>
    <property type="gene ID" value="AT1G79880"/>
</dbReference>
<dbReference type="Gramene" id="AT1G79880.2">
    <molecule id="Q0V7U7-2"/>
    <property type="protein sequence ID" value="AT1G79880.2"/>
    <property type="gene ID" value="AT1G79880"/>
</dbReference>
<dbReference type="Gramene" id="AT1G79880.3">
    <molecule id="Q0V7U7-3"/>
    <property type="protein sequence ID" value="AT1G79880.3"/>
    <property type="gene ID" value="AT1G79880"/>
</dbReference>
<dbReference type="KEGG" id="ath:AT1G79880"/>
<dbReference type="Araport" id="AT1G79880"/>
<dbReference type="TAIR" id="AT1G79880">
    <property type="gene designation" value="LA2"/>
</dbReference>
<dbReference type="eggNOG" id="KOG0118">
    <property type="taxonomic scope" value="Eukaryota"/>
</dbReference>
<dbReference type="HOGENOM" id="CLU_051929_0_0_1"/>
<dbReference type="InParanoid" id="Q0V7U7"/>
<dbReference type="OMA" id="WENIDNE"/>
<dbReference type="PhylomeDB" id="Q0V7U7"/>
<dbReference type="PRO" id="PR:Q0V7U7"/>
<dbReference type="Proteomes" id="UP000006548">
    <property type="component" value="Chromosome 1"/>
</dbReference>
<dbReference type="ExpressionAtlas" id="Q0V7U7">
    <property type="expression patterns" value="baseline and differential"/>
</dbReference>
<dbReference type="GO" id="GO:0005730">
    <property type="term" value="C:nucleolus"/>
    <property type="evidence" value="ECO:0000250"/>
    <property type="project" value="UniProtKB"/>
</dbReference>
<dbReference type="GO" id="GO:0005654">
    <property type="term" value="C:nucleoplasm"/>
    <property type="evidence" value="ECO:0000250"/>
    <property type="project" value="UniProtKB"/>
</dbReference>
<dbReference type="GO" id="GO:1990904">
    <property type="term" value="C:ribonucleoprotein complex"/>
    <property type="evidence" value="ECO:0007669"/>
    <property type="project" value="InterPro"/>
</dbReference>
<dbReference type="GO" id="GO:0003723">
    <property type="term" value="F:RNA binding"/>
    <property type="evidence" value="ECO:0000250"/>
    <property type="project" value="UniProtKB"/>
</dbReference>
<dbReference type="GO" id="GO:0042780">
    <property type="term" value="P:tRNA 3'-end processing"/>
    <property type="evidence" value="ECO:0000250"/>
    <property type="project" value="UniProtKB"/>
</dbReference>
<dbReference type="CDD" id="cd08030">
    <property type="entry name" value="LA_like_plant"/>
    <property type="match status" value="1"/>
</dbReference>
<dbReference type="CDD" id="cd12292">
    <property type="entry name" value="RRM2_La_like"/>
    <property type="match status" value="1"/>
</dbReference>
<dbReference type="FunFam" id="1.10.10.10:FF:000795">
    <property type="entry name" value="La protein 2"/>
    <property type="match status" value="1"/>
</dbReference>
<dbReference type="Gene3D" id="3.30.70.330">
    <property type="match status" value="2"/>
</dbReference>
<dbReference type="Gene3D" id="1.10.10.10">
    <property type="entry name" value="Winged helix-like DNA-binding domain superfamily/Winged helix DNA-binding domain"/>
    <property type="match status" value="1"/>
</dbReference>
<dbReference type="InterPro" id="IPR045180">
    <property type="entry name" value="La_dom_prot"/>
</dbReference>
<dbReference type="InterPro" id="IPR006630">
    <property type="entry name" value="La_HTH"/>
</dbReference>
<dbReference type="InterPro" id="IPR014886">
    <property type="entry name" value="La_xRRM"/>
</dbReference>
<dbReference type="InterPro" id="IPR002344">
    <property type="entry name" value="Lupus_La"/>
</dbReference>
<dbReference type="InterPro" id="IPR012677">
    <property type="entry name" value="Nucleotide-bd_a/b_plait_sf"/>
</dbReference>
<dbReference type="InterPro" id="IPR035979">
    <property type="entry name" value="RBD_domain_sf"/>
</dbReference>
<dbReference type="InterPro" id="IPR000504">
    <property type="entry name" value="RRM_dom"/>
</dbReference>
<dbReference type="InterPro" id="IPR036388">
    <property type="entry name" value="WH-like_DNA-bd_sf"/>
</dbReference>
<dbReference type="InterPro" id="IPR036390">
    <property type="entry name" value="WH_DNA-bd_sf"/>
</dbReference>
<dbReference type="PANTHER" id="PTHR22792:SF133">
    <property type="entry name" value="LA PROTEIN 2"/>
    <property type="match status" value="1"/>
</dbReference>
<dbReference type="PANTHER" id="PTHR22792">
    <property type="entry name" value="LUPUS LA PROTEIN-RELATED"/>
    <property type="match status" value="1"/>
</dbReference>
<dbReference type="Pfam" id="PF05383">
    <property type="entry name" value="La"/>
    <property type="match status" value="1"/>
</dbReference>
<dbReference type="Pfam" id="PF00076">
    <property type="entry name" value="RRM_1"/>
    <property type="match status" value="1"/>
</dbReference>
<dbReference type="Pfam" id="PF08777">
    <property type="entry name" value="RRM_3"/>
    <property type="match status" value="1"/>
</dbReference>
<dbReference type="PRINTS" id="PR00302">
    <property type="entry name" value="LUPUSLA"/>
</dbReference>
<dbReference type="SMART" id="SM00715">
    <property type="entry name" value="LA"/>
    <property type="match status" value="1"/>
</dbReference>
<dbReference type="SMART" id="SM00360">
    <property type="entry name" value="RRM"/>
    <property type="match status" value="2"/>
</dbReference>
<dbReference type="SUPFAM" id="SSF54928">
    <property type="entry name" value="RNA-binding domain, RBD"/>
    <property type="match status" value="1"/>
</dbReference>
<dbReference type="SUPFAM" id="SSF46785">
    <property type="entry name" value="Winged helix' DNA-binding domain"/>
    <property type="match status" value="1"/>
</dbReference>
<dbReference type="PROSITE" id="PS50961">
    <property type="entry name" value="HTH_LA"/>
    <property type="match status" value="1"/>
</dbReference>
<dbReference type="PROSITE" id="PS50102">
    <property type="entry name" value="RRM"/>
    <property type="match status" value="1"/>
</dbReference>
<dbReference type="PROSITE" id="PS51939">
    <property type="entry name" value="XRRM"/>
    <property type="match status" value="1"/>
</dbReference>
<evidence type="ECO:0000250" key="1"/>
<evidence type="ECO:0000255" key="2">
    <source>
        <dbReference type="PROSITE-ProRule" id="PRU00176"/>
    </source>
</evidence>
<evidence type="ECO:0000255" key="3">
    <source>
        <dbReference type="PROSITE-ProRule" id="PRU00332"/>
    </source>
</evidence>
<evidence type="ECO:0000255" key="4">
    <source>
        <dbReference type="PROSITE-ProRule" id="PRU01288"/>
    </source>
</evidence>
<evidence type="ECO:0000256" key="5">
    <source>
        <dbReference type="SAM" id="MobiDB-lite"/>
    </source>
</evidence>
<evidence type="ECO:0000269" key="6">
    <source>
    </source>
</evidence>
<evidence type="ECO:0000303" key="7">
    <source>
    </source>
</evidence>
<evidence type="ECO:0000305" key="8"/>
<sequence length="399" mass="44926">MASSFNEETAKKLLTQVEFYFSDSNLPTDGFLNREVTKSKDGLVSLPLVCSFSRMRNLLGLGNINREDIPPRIVEEVANLLRTSDFLKVSNNGQRIGRGTKLSKPEEVLEQVHRRTLAASPFEYSIKMEDVSSFFSQYAKVNSVRLPPNIADKRRFCGTALVEFSSEQDTQDILRQSLVYAGADLVLIPKSDFDCQRENMIKQLGKSESHNEFRRGQIVKFALKWIASEEKVTNKEKPSALKNKIKEKEDKETGIADREKENGDNSCASLCKDNTDQLVVPPWNNSNSVSSEVLKDLFQRFGSVEHIEYSGGLDSGYVWFTDSETAMKARAAVEFVGGLVVKNNFSVALEAINGEMERELWKRLSSAELEGGKEGHKKEKGKDECFENVQPTKKARKEP</sequence>
<name>LA2_ARATH</name>
<feature type="chain" id="PRO_0000428665" description="La protein 2">
    <location>
        <begin position="1"/>
        <end position="399"/>
    </location>
</feature>
<feature type="domain" description="HTH La-type RNA-binding" evidence="3">
    <location>
        <begin position="3"/>
        <end position="106"/>
    </location>
</feature>
<feature type="domain" description="RRM" evidence="2">
    <location>
        <begin position="115"/>
        <end position="192"/>
    </location>
</feature>
<feature type="domain" description="xRRM" evidence="4">
    <location>
        <begin position="269"/>
        <end position="399"/>
    </location>
</feature>
<feature type="region of interest" description="Disordered" evidence="5">
    <location>
        <begin position="367"/>
        <end position="399"/>
    </location>
</feature>
<feature type="compositionally biased region" description="Basic and acidic residues" evidence="5">
    <location>
        <begin position="370"/>
        <end position="385"/>
    </location>
</feature>
<feature type="splice variant" id="VSP_054171" description="In isoform 2 and isoform 3." evidence="7">
    <location>
        <begin position="1"/>
        <end position="54"/>
    </location>
</feature>
<feature type="splice variant" id="VSP_054172" description="In isoform 3." evidence="8">
    <original>G</original>
    <variation>GYDIKPNLVYSSL</variation>
    <location>
        <position position="372"/>
    </location>
</feature>
<feature type="sequence conflict" description="In Ref. 4; BAF00138." evidence="8" ref="4">
    <original>K</original>
    <variation>R</variation>
    <location>
        <position position="202"/>
    </location>
</feature>
<proteinExistence type="evidence at protein level"/>
<protein>
    <recommendedName>
        <fullName>La protein 2</fullName>
        <shortName>AtLa2</shortName>
    </recommendedName>
</protein>